<reference key="1">
    <citation type="journal article" date="2000" name="Nature">
        <title>Sequence and analysis of chromosome 3 of the plant Arabidopsis thaliana.</title>
        <authorList>
            <person name="Salanoubat M."/>
            <person name="Lemcke K."/>
            <person name="Rieger M."/>
            <person name="Ansorge W."/>
            <person name="Unseld M."/>
            <person name="Fartmann B."/>
            <person name="Valle G."/>
            <person name="Bloecker H."/>
            <person name="Perez-Alonso M."/>
            <person name="Obermaier B."/>
            <person name="Delseny M."/>
            <person name="Boutry M."/>
            <person name="Grivell L.A."/>
            <person name="Mache R."/>
            <person name="Puigdomenech P."/>
            <person name="De Simone V."/>
            <person name="Choisne N."/>
            <person name="Artiguenave F."/>
            <person name="Robert C."/>
            <person name="Brottier P."/>
            <person name="Wincker P."/>
            <person name="Cattolico L."/>
            <person name="Weissenbach J."/>
            <person name="Saurin W."/>
            <person name="Quetier F."/>
            <person name="Schaefer M."/>
            <person name="Mueller-Auer S."/>
            <person name="Gabel C."/>
            <person name="Fuchs M."/>
            <person name="Benes V."/>
            <person name="Wurmbach E."/>
            <person name="Drzonek H."/>
            <person name="Erfle H."/>
            <person name="Jordan N."/>
            <person name="Bangert S."/>
            <person name="Wiedelmann R."/>
            <person name="Kranz H."/>
            <person name="Voss H."/>
            <person name="Holland R."/>
            <person name="Brandt P."/>
            <person name="Nyakatura G."/>
            <person name="Vezzi A."/>
            <person name="D'Angelo M."/>
            <person name="Pallavicini A."/>
            <person name="Toppo S."/>
            <person name="Simionati B."/>
            <person name="Conrad A."/>
            <person name="Hornischer K."/>
            <person name="Kauer G."/>
            <person name="Loehnert T.-H."/>
            <person name="Nordsiek G."/>
            <person name="Reichelt J."/>
            <person name="Scharfe M."/>
            <person name="Schoen O."/>
            <person name="Bargues M."/>
            <person name="Terol J."/>
            <person name="Climent J."/>
            <person name="Navarro P."/>
            <person name="Collado C."/>
            <person name="Perez-Perez A."/>
            <person name="Ottenwaelder B."/>
            <person name="Duchemin D."/>
            <person name="Cooke R."/>
            <person name="Laudie M."/>
            <person name="Berger-Llauro C."/>
            <person name="Purnelle B."/>
            <person name="Masuy D."/>
            <person name="de Haan M."/>
            <person name="Maarse A.C."/>
            <person name="Alcaraz J.-P."/>
            <person name="Cottet A."/>
            <person name="Casacuberta E."/>
            <person name="Monfort A."/>
            <person name="Argiriou A."/>
            <person name="Flores M."/>
            <person name="Liguori R."/>
            <person name="Vitale D."/>
            <person name="Mannhaupt G."/>
            <person name="Haase D."/>
            <person name="Schoof H."/>
            <person name="Rudd S."/>
            <person name="Zaccaria P."/>
            <person name="Mewes H.-W."/>
            <person name="Mayer K.F.X."/>
            <person name="Kaul S."/>
            <person name="Town C.D."/>
            <person name="Koo H.L."/>
            <person name="Tallon L.J."/>
            <person name="Jenkins J."/>
            <person name="Rooney T."/>
            <person name="Rizzo M."/>
            <person name="Walts A."/>
            <person name="Utterback T."/>
            <person name="Fujii C.Y."/>
            <person name="Shea T.P."/>
            <person name="Creasy T.H."/>
            <person name="Haas B."/>
            <person name="Maiti R."/>
            <person name="Wu D."/>
            <person name="Peterson J."/>
            <person name="Van Aken S."/>
            <person name="Pai G."/>
            <person name="Militscher J."/>
            <person name="Sellers P."/>
            <person name="Gill J.E."/>
            <person name="Feldblyum T.V."/>
            <person name="Preuss D."/>
            <person name="Lin X."/>
            <person name="Nierman W.C."/>
            <person name="Salzberg S.L."/>
            <person name="White O."/>
            <person name="Venter J.C."/>
            <person name="Fraser C.M."/>
            <person name="Kaneko T."/>
            <person name="Nakamura Y."/>
            <person name="Sato S."/>
            <person name="Kato T."/>
            <person name="Asamizu E."/>
            <person name="Sasamoto S."/>
            <person name="Kimura T."/>
            <person name="Idesawa K."/>
            <person name="Kawashima K."/>
            <person name="Kishida Y."/>
            <person name="Kiyokawa C."/>
            <person name="Kohara M."/>
            <person name="Matsumoto M."/>
            <person name="Matsuno A."/>
            <person name="Muraki A."/>
            <person name="Nakayama S."/>
            <person name="Nakazaki N."/>
            <person name="Shinpo S."/>
            <person name="Takeuchi C."/>
            <person name="Wada T."/>
            <person name="Watanabe A."/>
            <person name="Yamada M."/>
            <person name="Yasuda M."/>
            <person name="Tabata S."/>
        </authorList>
    </citation>
    <scope>NUCLEOTIDE SEQUENCE [LARGE SCALE GENOMIC DNA]</scope>
    <source>
        <strain>cv. Columbia</strain>
    </source>
</reference>
<reference key="2">
    <citation type="journal article" date="2017" name="Plant J.">
        <title>Araport11: a complete reannotation of the Arabidopsis thaliana reference genome.</title>
        <authorList>
            <person name="Cheng C.Y."/>
            <person name="Krishnakumar V."/>
            <person name="Chan A.P."/>
            <person name="Thibaud-Nissen F."/>
            <person name="Schobel S."/>
            <person name="Town C.D."/>
        </authorList>
    </citation>
    <scope>GENOME REANNOTATION</scope>
    <source>
        <strain>cv. Columbia</strain>
    </source>
</reference>
<reference key="3">
    <citation type="submission" date="2002-03" db="EMBL/GenBank/DDBJ databases">
        <title>Full-length cDNA from Arabidopsis thaliana.</title>
        <authorList>
            <person name="Brover V.V."/>
            <person name="Troukhan M.E."/>
            <person name="Alexandrov N.A."/>
            <person name="Lu Y.-P."/>
            <person name="Flavell R.B."/>
            <person name="Feldmann K.A."/>
        </authorList>
    </citation>
    <scope>NUCLEOTIDE SEQUENCE [LARGE SCALE MRNA] (ISOFORM 1)</scope>
</reference>
<reference key="4">
    <citation type="submission" date="2006-08" db="EMBL/GenBank/DDBJ databases">
        <title>Arabidopsis ORF clones.</title>
        <authorList>
            <person name="Quinitio C."/>
            <person name="Chen H."/>
            <person name="Kim C.J."/>
            <person name="Shinn P."/>
            <person name="Ecker J.R."/>
        </authorList>
    </citation>
    <scope>NUCLEOTIDE SEQUENCE [LARGE SCALE MRNA] (ISOFORM 1)</scope>
    <source>
        <strain>cv. Columbia</strain>
    </source>
</reference>
<reference key="5">
    <citation type="journal article" date="2005" name="Biochim. Biophys. Acta">
        <title>Biosynthesis of lysine in plants: evidence for a variant of the known bacterial pathways.</title>
        <authorList>
            <person name="Hudson A.O."/>
            <person name="Bless C."/>
            <person name="Macedo P."/>
            <person name="Chatterjee S.P."/>
            <person name="Singh B.K."/>
            <person name="Gilvarg C."/>
            <person name="Leustek T."/>
        </authorList>
    </citation>
    <scope>FUNCTION</scope>
</reference>
<protein>
    <recommendedName>
        <fullName>4-hydroxy-tetrahydrodipicolinate reductase 2, chloroplastic</fullName>
        <shortName>HTPA reductase 2</shortName>
        <ecNumber>1.17.1.8</ecNumber>
    </recommendedName>
</protein>
<proteinExistence type="evidence at protein level"/>
<keyword id="KW-0002">3D-structure</keyword>
<keyword id="KW-0025">Alternative splicing</keyword>
<keyword id="KW-0028">Amino-acid biosynthesis</keyword>
<keyword id="KW-0150">Chloroplast</keyword>
<keyword id="KW-0220">Diaminopimelate biosynthesis</keyword>
<keyword id="KW-0457">Lysine biosynthesis</keyword>
<keyword id="KW-0520">NAD</keyword>
<keyword id="KW-0521">NADP</keyword>
<keyword id="KW-0560">Oxidoreductase</keyword>
<keyword id="KW-0934">Plastid</keyword>
<keyword id="KW-1185">Reference proteome</keyword>
<keyword id="KW-0809">Transit peptide</keyword>
<dbReference type="EC" id="1.17.1.8"/>
<dbReference type="EMBL" id="AL138647">
    <property type="protein sequence ID" value="CAB75808.1"/>
    <property type="status" value="ALT_SEQ"/>
    <property type="molecule type" value="Genomic_DNA"/>
</dbReference>
<dbReference type="EMBL" id="CP002686">
    <property type="protein sequence ID" value="AEE79981.1"/>
    <property type="molecule type" value="Genomic_DNA"/>
</dbReference>
<dbReference type="EMBL" id="CP002686">
    <property type="protein sequence ID" value="AEE79982.1"/>
    <property type="molecule type" value="Genomic_DNA"/>
</dbReference>
<dbReference type="EMBL" id="AY087505">
    <property type="protein sequence ID" value="AAM65048.1"/>
    <property type="molecule type" value="mRNA"/>
</dbReference>
<dbReference type="EMBL" id="BT026511">
    <property type="protein sequence ID" value="ABH04618.1"/>
    <property type="molecule type" value="mRNA"/>
</dbReference>
<dbReference type="PIR" id="T47813">
    <property type="entry name" value="T47813"/>
</dbReference>
<dbReference type="RefSeq" id="NP_567088.1">
    <molecule id="Q8LB01-1"/>
    <property type="nucleotide sequence ID" value="NM_115852.4"/>
</dbReference>
<dbReference type="RefSeq" id="NP_974464.1">
    <molecule id="Q8LB01-2"/>
    <property type="nucleotide sequence ID" value="NM_202735.1"/>
</dbReference>
<dbReference type="PDB" id="5UA0">
    <property type="method" value="X-ray"/>
    <property type="resolution" value="2.30 A"/>
    <property type="chains" value="A/B/C=54-349"/>
</dbReference>
<dbReference type="PDBsum" id="5UA0"/>
<dbReference type="SMR" id="Q8LB01"/>
<dbReference type="FunCoup" id="Q8LB01">
    <property type="interactions" value="331"/>
</dbReference>
<dbReference type="STRING" id="3702.Q8LB01"/>
<dbReference type="iPTMnet" id="Q8LB01"/>
<dbReference type="PaxDb" id="3702-AT3G59890.1"/>
<dbReference type="ProteomicsDB" id="224707">
    <molecule id="Q8LB01-1"/>
</dbReference>
<dbReference type="EnsemblPlants" id="AT3G59890.1">
    <molecule id="Q8LB01-1"/>
    <property type="protein sequence ID" value="AT3G59890.1"/>
    <property type="gene ID" value="AT3G59890"/>
</dbReference>
<dbReference type="EnsemblPlants" id="AT3G59890.2">
    <molecule id="Q8LB01-2"/>
    <property type="protein sequence ID" value="AT3G59890.2"/>
    <property type="gene ID" value="AT3G59890"/>
</dbReference>
<dbReference type="GeneID" id="825159"/>
<dbReference type="Gramene" id="AT3G59890.1">
    <molecule id="Q8LB01-1"/>
    <property type="protein sequence ID" value="AT3G59890.1"/>
    <property type="gene ID" value="AT3G59890"/>
</dbReference>
<dbReference type="Gramene" id="AT3G59890.2">
    <molecule id="Q8LB01-2"/>
    <property type="protein sequence ID" value="AT3G59890.2"/>
    <property type="gene ID" value="AT3G59890"/>
</dbReference>
<dbReference type="KEGG" id="ath:AT3G59890"/>
<dbReference type="Araport" id="AT3G59890"/>
<dbReference type="TAIR" id="AT3G59890"/>
<dbReference type="eggNOG" id="ENOG502QPSY">
    <property type="taxonomic scope" value="Eukaryota"/>
</dbReference>
<dbReference type="InParanoid" id="Q8LB01"/>
<dbReference type="OMA" id="KGKRCFP"/>
<dbReference type="PhylomeDB" id="Q8LB01"/>
<dbReference type="BioCyc" id="ARA:AT3G59890-MONOMER"/>
<dbReference type="BRENDA" id="1.17.1.8">
    <property type="organism ID" value="399"/>
</dbReference>
<dbReference type="UniPathway" id="UPA00034">
    <property type="reaction ID" value="UER00018"/>
</dbReference>
<dbReference type="PRO" id="PR:Q8LB01"/>
<dbReference type="Proteomes" id="UP000006548">
    <property type="component" value="Chromosome 3"/>
</dbReference>
<dbReference type="ExpressionAtlas" id="Q8LB01">
    <property type="expression patterns" value="baseline and differential"/>
</dbReference>
<dbReference type="GO" id="GO:0009507">
    <property type="term" value="C:chloroplast"/>
    <property type="evidence" value="ECO:0007669"/>
    <property type="project" value="UniProtKB-SubCell"/>
</dbReference>
<dbReference type="GO" id="GO:0008839">
    <property type="term" value="F:4-hydroxy-tetrahydrodipicolinate reductase"/>
    <property type="evidence" value="ECO:0007669"/>
    <property type="project" value="UniProtKB-EC"/>
</dbReference>
<dbReference type="GO" id="GO:0070402">
    <property type="term" value="F:NADPH binding"/>
    <property type="evidence" value="ECO:0007669"/>
    <property type="project" value="InterPro"/>
</dbReference>
<dbReference type="GO" id="GO:0019877">
    <property type="term" value="P:diaminopimelate biosynthetic process"/>
    <property type="evidence" value="ECO:0007669"/>
    <property type="project" value="UniProtKB-KW"/>
</dbReference>
<dbReference type="GO" id="GO:0009089">
    <property type="term" value="P:lysine biosynthetic process via diaminopimelate"/>
    <property type="evidence" value="ECO:0007669"/>
    <property type="project" value="UniProtKB-UniPathway"/>
</dbReference>
<dbReference type="CDD" id="cd02274">
    <property type="entry name" value="DHDPR_N"/>
    <property type="match status" value="1"/>
</dbReference>
<dbReference type="FunFam" id="3.40.50.720:FF:000264">
    <property type="entry name" value="4-hydroxy-tetrahydrodipicolinate reductase 2 chloroplastic"/>
    <property type="match status" value="1"/>
</dbReference>
<dbReference type="FunFam" id="3.30.360.10:FF:000037">
    <property type="entry name" value="4-hydroxy-tetrahydrodipicolinate reductase 2, chloroplastic"/>
    <property type="match status" value="1"/>
</dbReference>
<dbReference type="Gene3D" id="3.30.360.10">
    <property type="entry name" value="Dihydrodipicolinate Reductase, domain 2"/>
    <property type="match status" value="1"/>
</dbReference>
<dbReference type="Gene3D" id="3.40.50.720">
    <property type="entry name" value="NAD(P)-binding Rossmann-like Domain"/>
    <property type="match status" value="1"/>
</dbReference>
<dbReference type="InterPro" id="IPR022663">
    <property type="entry name" value="DapB_C"/>
</dbReference>
<dbReference type="InterPro" id="IPR000846">
    <property type="entry name" value="DapB_N"/>
</dbReference>
<dbReference type="InterPro" id="IPR023940">
    <property type="entry name" value="DHDPR_bac"/>
</dbReference>
<dbReference type="InterPro" id="IPR011859">
    <property type="entry name" value="Dihydrodipicolinate_Rdtase_pln"/>
</dbReference>
<dbReference type="InterPro" id="IPR036291">
    <property type="entry name" value="NAD(P)-bd_dom_sf"/>
</dbReference>
<dbReference type="NCBIfam" id="TIGR02130">
    <property type="entry name" value="dapB_plant"/>
    <property type="match status" value="1"/>
</dbReference>
<dbReference type="PANTHER" id="PTHR20836:SF0">
    <property type="entry name" value="4-HYDROXY-TETRAHYDRODIPICOLINATE REDUCTASE 1, CHLOROPLASTIC-RELATED"/>
    <property type="match status" value="1"/>
</dbReference>
<dbReference type="PANTHER" id="PTHR20836">
    <property type="entry name" value="DIHYDRODIPICOLINATE REDUCTASE"/>
    <property type="match status" value="1"/>
</dbReference>
<dbReference type="Pfam" id="PF05173">
    <property type="entry name" value="DapB_C"/>
    <property type="match status" value="1"/>
</dbReference>
<dbReference type="Pfam" id="PF01113">
    <property type="entry name" value="DapB_N"/>
    <property type="match status" value="1"/>
</dbReference>
<dbReference type="SUPFAM" id="SSF51735">
    <property type="entry name" value="NAD(P)-binding Rossmann-fold domains"/>
    <property type="match status" value="1"/>
</dbReference>
<accession>Q8LB01</accession>
<accession>Q3EAH1</accession>
<accession>Q9M1Y5</accession>
<feature type="transit peptide" description="Chloroplast" evidence="2">
    <location>
        <begin position="1"/>
        <end position="53"/>
    </location>
</feature>
<feature type="chain" id="PRO_0000307183" description="4-hydroxy-tetrahydrodipicolinate reductase 2, chloroplastic">
    <location>
        <begin position="54"/>
        <end position="349"/>
    </location>
</feature>
<feature type="active site" description="Proton donor/acceptor" evidence="1">
    <location>
        <position position="232"/>
    </location>
</feature>
<feature type="active site" description="Proton donor" evidence="1">
    <location>
        <position position="236"/>
    </location>
</feature>
<feature type="binding site" evidence="1">
    <location>
        <begin position="81"/>
        <end position="86"/>
    </location>
    <ligand>
        <name>NAD(+)</name>
        <dbReference type="ChEBI" id="CHEBI:57540"/>
    </ligand>
</feature>
<feature type="binding site" evidence="1">
    <location>
        <begin position="173"/>
        <end position="175"/>
    </location>
    <ligand>
        <name>NAD(+)</name>
        <dbReference type="ChEBI" id="CHEBI:57540"/>
    </ligand>
</feature>
<feature type="binding site" evidence="1">
    <location>
        <begin position="196"/>
        <end position="199"/>
    </location>
    <ligand>
        <name>NAD(+)</name>
        <dbReference type="ChEBI" id="CHEBI:57540"/>
    </ligand>
</feature>
<feature type="binding site" evidence="1">
    <location>
        <begin position="241"/>
        <end position="242"/>
    </location>
    <ligand>
        <name>(S)-2,3,4,5-tetrahydrodipicolinate</name>
        <dbReference type="ChEBI" id="CHEBI:16845"/>
    </ligand>
</feature>
<feature type="splice variant" id="VSP_028629" description="In isoform 2." evidence="3">
    <location>
        <begin position="1"/>
        <end position="6"/>
    </location>
</feature>
<feature type="strand" evidence="5">
    <location>
        <begin position="76"/>
        <end position="80"/>
    </location>
</feature>
<feature type="turn" evidence="5">
    <location>
        <begin position="81"/>
        <end position="83"/>
    </location>
</feature>
<feature type="helix" evidence="5">
    <location>
        <begin position="85"/>
        <end position="96"/>
    </location>
</feature>
<feature type="strand" evidence="5">
    <location>
        <begin position="103"/>
        <end position="106"/>
    </location>
</feature>
<feature type="turn" evidence="5">
    <location>
        <begin position="109"/>
        <end position="113"/>
    </location>
</feature>
<feature type="strand" evidence="5">
    <location>
        <begin position="115"/>
        <end position="118"/>
    </location>
</feature>
<feature type="strand" evidence="5">
    <location>
        <begin position="121"/>
        <end position="126"/>
    </location>
</feature>
<feature type="helix" evidence="5">
    <location>
        <begin position="131"/>
        <end position="141"/>
    </location>
</feature>
<feature type="strand" evidence="5">
    <location>
        <begin position="145"/>
        <end position="149"/>
    </location>
</feature>
<feature type="helix" evidence="5">
    <location>
        <begin position="153"/>
        <end position="155"/>
    </location>
</feature>
<feature type="helix" evidence="5">
    <location>
        <begin position="156"/>
        <end position="166"/>
    </location>
</feature>
<feature type="strand" evidence="5">
    <location>
        <begin position="170"/>
        <end position="172"/>
    </location>
</feature>
<feature type="helix" evidence="5">
    <location>
        <begin position="179"/>
        <end position="189"/>
    </location>
</feature>
<feature type="strand" evidence="5">
    <location>
        <begin position="193"/>
        <end position="195"/>
    </location>
</feature>
<feature type="helix" evidence="5">
    <location>
        <begin position="201"/>
        <end position="216"/>
    </location>
</feature>
<feature type="turn" evidence="5">
    <location>
        <begin position="218"/>
        <end position="223"/>
    </location>
</feature>
<feature type="strand" evidence="5">
    <location>
        <begin position="225"/>
        <end position="231"/>
    </location>
</feature>
<feature type="helix" evidence="5">
    <location>
        <begin position="232"/>
        <end position="236"/>
    </location>
</feature>
<feature type="turn" evidence="5">
    <location>
        <begin position="237"/>
        <end position="239"/>
    </location>
</feature>
<feature type="helix" evidence="5">
    <location>
        <begin position="240"/>
        <end position="252"/>
    </location>
</feature>
<feature type="helix" evidence="5">
    <location>
        <begin position="259"/>
        <end position="261"/>
    </location>
</feature>
<feature type="strand" evidence="5">
    <location>
        <begin position="263"/>
        <end position="265"/>
    </location>
</feature>
<feature type="strand" evidence="5">
    <location>
        <begin position="267"/>
        <end position="282"/>
    </location>
</feature>
<feature type="strand" evidence="5">
    <location>
        <begin position="285"/>
        <end position="293"/>
    </location>
</feature>
<feature type="strand" evidence="5">
    <location>
        <begin position="300"/>
        <end position="307"/>
    </location>
</feature>
<feature type="helix" evidence="5">
    <location>
        <begin position="311"/>
        <end position="329"/>
    </location>
</feature>
<feature type="helix" evidence="5">
    <location>
        <begin position="339"/>
        <end position="345"/>
    </location>
</feature>
<name>DAPB2_ARATH</name>
<evidence type="ECO:0000250" key="1"/>
<evidence type="ECO:0000255" key="2"/>
<evidence type="ECO:0000305" key="3"/>
<evidence type="ECO:0000305" key="4">
    <source>
    </source>
</evidence>
<evidence type="ECO:0007829" key="5">
    <source>
        <dbReference type="PDB" id="5UA0"/>
    </source>
</evidence>
<gene>
    <name type="primary">DAPB2</name>
    <name type="ordered locus">At3g59890</name>
    <name type="ORF">F24G16.160</name>
</gene>
<organism>
    <name type="scientific">Arabidopsis thaliana</name>
    <name type="common">Mouse-ear cress</name>
    <dbReference type="NCBI Taxonomy" id="3702"/>
    <lineage>
        <taxon>Eukaryota</taxon>
        <taxon>Viridiplantae</taxon>
        <taxon>Streptophyta</taxon>
        <taxon>Embryophyta</taxon>
        <taxon>Tracheophyta</taxon>
        <taxon>Spermatophyta</taxon>
        <taxon>Magnoliopsida</taxon>
        <taxon>eudicotyledons</taxon>
        <taxon>Gunneridae</taxon>
        <taxon>Pentapetalae</taxon>
        <taxon>rosids</taxon>
        <taxon>malvids</taxon>
        <taxon>Brassicales</taxon>
        <taxon>Brassicaceae</taxon>
        <taxon>Camelineae</taxon>
        <taxon>Arabidopsis</taxon>
    </lineage>
</organism>
<sequence length="349" mass="37870">MAANGLMAASSVFLHRPVHPHFSFSSRTNQMVPLGFKGRVSFIGNVKRCFPVVLSMGKSETFEEAGNSVAPGNGISIMVNGCSGKMGKAVIKAADSAGVNIVPTSFGSVEEAGQTVEVCGKEILVHGPTEREKVLSSVFEKYPELIVVDYTIPSAVNDNAELYGKVGVPFVMGTTGGDRTRLYKTVEESKIYAVISPQMGKQVVAFLAAMEIMSEQFPGAFAGYSLEVMESHQASKLDASGTAKAVISCFQKLGVSYDMDQIQLIRDPKQQIEVVGVPEEHVSGHAFHLYHLTSPDKTVSFEFQHNVCGRSIYAEGTVDAVLFLAKKIRSKAEKRIYNMIDVLREGNMR</sequence>
<comment type="function">
    <text evidence="4">Catalyzes the conversion of 4-hydroxy-tetrahydrodipicolinate (HTPA) to tetrahydrodipicolinate.</text>
</comment>
<comment type="catalytic activity">
    <reaction>
        <text>(S)-2,3,4,5-tetrahydrodipicolinate + NAD(+) + H2O = (2S,4S)-4-hydroxy-2,3,4,5-tetrahydrodipicolinate + NADH + H(+)</text>
        <dbReference type="Rhea" id="RHEA:35323"/>
        <dbReference type="ChEBI" id="CHEBI:15377"/>
        <dbReference type="ChEBI" id="CHEBI:15378"/>
        <dbReference type="ChEBI" id="CHEBI:16845"/>
        <dbReference type="ChEBI" id="CHEBI:57540"/>
        <dbReference type="ChEBI" id="CHEBI:57945"/>
        <dbReference type="ChEBI" id="CHEBI:67139"/>
        <dbReference type="EC" id="1.17.1.8"/>
    </reaction>
</comment>
<comment type="catalytic activity">
    <reaction>
        <text>(S)-2,3,4,5-tetrahydrodipicolinate + NADP(+) + H2O = (2S,4S)-4-hydroxy-2,3,4,5-tetrahydrodipicolinate + NADPH + H(+)</text>
        <dbReference type="Rhea" id="RHEA:35331"/>
        <dbReference type="ChEBI" id="CHEBI:15377"/>
        <dbReference type="ChEBI" id="CHEBI:15378"/>
        <dbReference type="ChEBI" id="CHEBI:16845"/>
        <dbReference type="ChEBI" id="CHEBI:57783"/>
        <dbReference type="ChEBI" id="CHEBI:58349"/>
        <dbReference type="ChEBI" id="CHEBI:67139"/>
        <dbReference type="EC" id="1.17.1.8"/>
    </reaction>
</comment>
<comment type="pathway">
    <text>Amino-acid biosynthesis; L-lysine biosynthesis via DAP pathway; (S)-tetrahydrodipicolinate from L-aspartate: step 4/4.</text>
</comment>
<comment type="subcellular location">
    <subcellularLocation>
        <location evidence="3">Plastid</location>
        <location evidence="3">Chloroplast</location>
    </subcellularLocation>
</comment>
<comment type="alternative products">
    <event type="alternative splicing"/>
    <isoform>
        <id>Q8LB01-1</id>
        <name>1</name>
        <sequence type="displayed"/>
    </isoform>
    <isoform>
        <id>Q8LB01-2</id>
        <name>2</name>
        <sequence type="described" ref="VSP_028629"/>
    </isoform>
</comment>
<comment type="similarity">
    <text evidence="3">Belongs to the DapB family.</text>
</comment>
<comment type="caution">
    <text evidence="3">Was originally thought to be a dihydrodipicolinate reductase (DHDPR), catalyzing the conversion of dihydrodipicolinate to tetrahydrodipicolinate. However, it was shown in E.coli that the substrate of the enzymatic reaction is not dihydrodipicolinate (DHDP) but in fact (2S,4S)-4-hydroxy-2,3,4,5-tetrahydrodipicolinic acid (HTPA), the product released by the DapA-catalyzed reaction.</text>
</comment>
<comment type="sequence caution" evidence="3">
    <conflict type="erroneous gene model prediction">
        <sequence resource="EMBL-CDS" id="CAB75808"/>
    </conflict>
</comment>